<protein>
    <recommendedName>
        <fullName>Uncharacterized protein 073L</fullName>
    </recommendedName>
</protein>
<reference key="1">
    <citation type="journal article" date="2004" name="Virology">
        <title>Comparative genomic analyses of frog virus 3, type species of the genus Ranavirus (family Iridoviridae).</title>
        <authorList>
            <person name="Tan W.G."/>
            <person name="Barkman T.J."/>
            <person name="Gregory Chinchar V."/>
            <person name="Essani K."/>
        </authorList>
    </citation>
    <scope>NUCLEOTIDE SEQUENCE [LARGE SCALE GENOMIC DNA]</scope>
</reference>
<organismHost>
    <name type="scientific">Dryophytes versicolor</name>
    <name type="common">chameleon treefrog</name>
    <dbReference type="NCBI Taxonomy" id="30343"/>
</organismHost>
<organismHost>
    <name type="scientific">Lithobates pipiens</name>
    <name type="common">Northern leopard frog</name>
    <name type="synonym">Rana pipiens</name>
    <dbReference type="NCBI Taxonomy" id="8404"/>
</organismHost>
<organismHost>
    <name type="scientific">Lithobates sylvaticus</name>
    <name type="common">Wood frog</name>
    <name type="synonym">Rana sylvatica</name>
    <dbReference type="NCBI Taxonomy" id="45438"/>
</organismHost>
<organismHost>
    <name type="scientific">Notophthalmus viridescens</name>
    <name type="common">Eastern newt</name>
    <name type="synonym">Triturus viridescens</name>
    <dbReference type="NCBI Taxonomy" id="8316"/>
</organismHost>
<feature type="chain" id="PRO_0000410502" description="Uncharacterized protein 073L">
    <location>
        <begin position="1"/>
        <end position="324"/>
    </location>
</feature>
<accession>Q6GZQ2</accession>
<gene>
    <name type="ORF">FV3-073L</name>
</gene>
<dbReference type="EMBL" id="AY548484">
    <property type="protein sequence ID" value="AAT09733.1"/>
    <property type="molecule type" value="Genomic_DNA"/>
</dbReference>
<dbReference type="RefSeq" id="YP_031652.1">
    <property type="nucleotide sequence ID" value="NC_005946.1"/>
</dbReference>
<dbReference type="KEGG" id="vg:2947792"/>
<dbReference type="Proteomes" id="UP000008770">
    <property type="component" value="Segment"/>
</dbReference>
<dbReference type="CDD" id="cd20336">
    <property type="entry name" value="Rcat_RBR"/>
    <property type="match status" value="1"/>
</dbReference>
<dbReference type="Gene3D" id="1.20.120.1750">
    <property type="match status" value="1"/>
</dbReference>
<dbReference type="InterPro" id="IPR013087">
    <property type="entry name" value="Znf_C2H2_type"/>
</dbReference>
<dbReference type="SUPFAM" id="SSF57850">
    <property type="entry name" value="RING/U-box"/>
    <property type="match status" value="1"/>
</dbReference>
<dbReference type="PROSITE" id="PS00028">
    <property type="entry name" value="ZINC_FINGER_C2H2_1"/>
    <property type="match status" value="1"/>
</dbReference>
<sequence>MECIYCFETVSAVVPCAGKCDALICVDCFKGSMDALDTFPKCQCGLEYSPNELEPVLPAATLRGLDAKVKQVWDDNIHTVNAVNAQIDDCKKTYLDALPLAASIATQSFLRKALDDYAAKITKTAEEKPVDCPAEFCMGFRVGGKPCSVCGCTECAYCKALMNIDKPHTCKAEDLESIKAMDSNYVKCPECKKRVEKIDGCNDMTCAYCSTNFNYRTGLKQHGGSHNRIHLTHHQNLLSVKFQHSLSPSTLDALKRLETTMNVIESPKIYKRYNKKIAYEWISKRNMSTAIRREYGNISKEISALTVDDVELHLVSVLTKFNII</sequence>
<name>073L_FRG3G</name>
<keyword id="KW-1185">Reference proteome</keyword>
<organism>
    <name type="scientific">Frog virus 3 (isolate Goorha)</name>
    <name type="common">FV-3</name>
    <dbReference type="NCBI Taxonomy" id="654924"/>
    <lineage>
        <taxon>Viruses</taxon>
        <taxon>Varidnaviria</taxon>
        <taxon>Bamfordvirae</taxon>
        <taxon>Nucleocytoviricota</taxon>
        <taxon>Megaviricetes</taxon>
        <taxon>Pimascovirales</taxon>
        <taxon>Iridoviridae</taxon>
        <taxon>Alphairidovirinae</taxon>
        <taxon>Ranavirus</taxon>
        <taxon>Frog virus 3</taxon>
    </lineage>
</organism>
<proteinExistence type="predicted"/>